<accession>Q7TP52</accession>
<name>CMBL_RAT</name>
<keyword id="KW-0007">Acetylation</keyword>
<keyword id="KW-0963">Cytoplasm</keyword>
<keyword id="KW-0378">Hydrolase</keyword>
<keyword id="KW-0597">Phosphoprotein</keyword>
<keyword id="KW-1185">Reference proteome</keyword>
<proteinExistence type="evidence at transcript level"/>
<dbReference type="EC" id="3.1.-.-"/>
<dbReference type="EMBL" id="AY325197">
    <property type="protein sequence ID" value="AAP92598.1"/>
    <property type="molecule type" value="mRNA"/>
</dbReference>
<dbReference type="EMBL" id="BC088459">
    <property type="protein sequence ID" value="AAH88459.1"/>
    <property type="molecule type" value="mRNA"/>
</dbReference>
<dbReference type="RefSeq" id="NP_001008770.1">
    <property type="nucleotide sequence ID" value="NM_001008770.3"/>
</dbReference>
<dbReference type="RefSeq" id="XP_006232159.1">
    <property type="nucleotide sequence ID" value="XM_006232097.5"/>
</dbReference>
<dbReference type="SMR" id="Q7TP52"/>
<dbReference type="FunCoup" id="Q7TP52">
    <property type="interactions" value="896"/>
</dbReference>
<dbReference type="STRING" id="10116.ENSRNOP00000015448"/>
<dbReference type="ESTHER" id="ratno-CMBL">
    <property type="family name" value="CMBL"/>
</dbReference>
<dbReference type="PhosphoSitePlus" id="Q7TP52"/>
<dbReference type="PaxDb" id="10116-ENSRNOP00000015448"/>
<dbReference type="Ensembl" id="ENSRNOT00000015448.8">
    <property type="protein sequence ID" value="ENSRNOP00000015448.4"/>
    <property type="gene ID" value="ENSRNOG00000011260.8"/>
</dbReference>
<dbReference type="GeneID" id="310201"/>
<dbReference type="KEGG" id="rno:310201"/>
<dbReference type="UCSC" id="RGD:1306952">
    <property type="organism name" value="rat"/>
</dbReference>
<dbReference type="AGR" id="RGD:1306952"/>
<dbReference type="CTD" id="134147"/>
<dbReference type="RGD" id="1306952">
    <property type="gene designation" value="Cmbl"/>
</dbReference>
<dbReference type="eggNOG" id="KOG3043">
    <property type="taxonomic scope" value="Eukaryota"/>
</dbReference>
<dbReference type="GeneTree" id="ENSGT00390000000183"/>
<dbReference type="HOGENOM" id="CLU_054590_8_2_1"/>
<dbReference type="InParanoid" id="Q7TP52"/>
<dbReference type="OrthoDB" id="1632at9989"/>
<dbReference type="PhylomeDB" id="Q7TP52"/>
<dbReference type="TreeFam" id="TF331795"/>
<dbReference type="BRENDA" id="3.1.1.45">
    <property type="organism ID" value="5301"/>
</dbReference>
<dbReference type="Reactome" id="R-RNO-211945">
    <property type="pathway name" value="Phase I - Functionalization of compounds"/>
</dbReference>
<dbReference type="PRO" id="PR:Q7TP52"/>
<dbReference type="Proteomes" id="UP000002494">
    <property type="component" value="Chromosome 2"/>
</dbReference>
<dbReference type="Bgee" id="ENSRNOG00000011260">
    <property type="expression patterns" value="Expressed in adult mammalian kidney and 19 other cell types or tissues"/>
</dbReference>
<dbReference type="GO" id="GO:0005829">
    <property type="term" value="C:cytosol"/>
    <property type="evidence" value="ECO:0007669"/>
    <property type="project" value="UniProtKB-SubCell"/>
</dbReference>
<dbReference type="GO" id="GO:0016787">
    <property type="term" value="F:hydrolase activity"/>
    <property type="evidence" value="ECO:0007669"/>
    <property type="project" value="UniProtKB-KW"/>
</dbReference>
<dbReference type="FunFam" id="3.40.50.1820:FF:000178">
    <property type="entry name" value="Carboxymethylenebutenolidase homolog"/>
    <property type="match status" value="1"/>
</dbReference>
<dbReference type="Gene3D" id="3.40.50.1820">
    <property type="entry name" value="alpha/beta hydrolase"/>
    <property type="match status" value="1"/>
</dbReference>
<dbReference type="InterPro" id="IPR029058">
    <property type="entry name" value="AB_hydrolase_fold"/>
</dbReference>
<dbReference type="InterPro" id="IPR042946">
    <property type="entry name" value="CMBL"/>
</dbReference>
<dbReference type="InterPro" id="IPR002925">
    <property type="entry name" value="Dienelactn_hydro"/>
</dbReference>
<dbReference type="PANTHER" id="PTHR46812">
    <property type="entry name" value="CARBOXYMETHYLENEBUTENOLIDASE HOMOLOG"/>
    <property type="match status" value="1"/>
</dbReference>
<dbReference type="PANTHER" id="PTHR46812:SF1">
    <property type="entry name" value="CARBOXYMETHYLENEBUTENOLIDASE HOMOLOG"/>
    <property type="match status" value="1"/>
</dbReference>
<dbReference type="Pfam" id="PF01738">
    <property type="entry name" value="DLH"/>
    <property type="match status" value="1"/>
</dbReference>
<dbReference type="SUPFAM" id="SSF53474">
    <property type="entry name" value="alpha/beta-Hydrolases"/>
    <property type="match status" value="1"/>
</dbReference>
<reference key="1">
    <citation type="submission" date="2003-06" db="EMBL/GenBank/DDBJ databases">
        <title>Liver regeneration after PH.</title>
        <authorList>
            <person name="Xu C.S."/>
            <person name="Li W.Q."/>
            <person name="Li Y.C."/>
            <person name="Chai L.Q."/>
            <person name="Yuan J.Y."/>
            <person name="Yang K.J."/>
            <person name="Yan H.M."/>
            <person name="Chang C.F."/>
            <person name="Zhao L.F."/>
            <person name="Ma H."/>
            <person name="Wang L."/>
            <person name="Wang S.F."/>
            <person name="Han H.P."/>
            <person name="Wang G.P."/>
            <person name="Shi J.B."/>
            <person name="Rahman S."/>
            <person name="Wang Q.N."/>
            <person name="Zhang J.B."/>
        </authorList>
    </citation>
    <scope>NUCLEOTIDE SEQUENCE [LARGE SCALE MRNA]</scope>
    <source>
        <tissue>Liver</tissue>
    </source>
</reference>
<reference key="2">
    <citation type="journal article" date="2004" name="Genome Res.">
        <title>The status, quality, and expansion of the NIH full-length cDNA project: the Mammalian Gene Collection (MGC).</title>
        <authorList>
            <consortium name="The MGC Project Team"/>
        </authorList>
    </citation>
    <scope>NUCLEOTIDE SEQUENCE [LARGE SCALE MRNA]</scope>
    <source>
        <tissue>Kidney</tissue>
    </source>
</reference>
<gene>
    <name type="primary">Cmbl</name>
    <name type="ORF">Ab2-225</name>
</gene>
<evidence type="ECO:0000250" key="1"/>
<evidence type="ECO:0000250" key="2">
    <source>
        <dbReference type="UniProtKB" id="Q96DG6"/>
    </source>
</evidence>
<evidence type="ECO:0000305" key="3"/>
<protein>
    <recommendedName>
        <fullName>Carboxymethylenebutenolidase homolog</fullName>
        <ecNumber>3.1.-.-</ecNumber>
    </recommendedName>
    <alternativeName>
        <fullName>Liver regeneration-related protein LRRG072</fullName>
    </alternativeName>
</protein>
<comment type="function">
    <text evidence="1">Cysteine hydrolase.</text>
</comment>
<comment type="subcellular location">
    <subcellularLocation>
        <location evidence="1">Cytoplasm</location>
        <location evidence="1">Cytosol</location>
    </subcellularLocation>
</comment>
<comment type="similarity">
    <text evidence="3">Belongs to the dienelactone hydrolase family.</text>
</comment>
<organism>
    <name type="scientific">Rattus norvegicus</name>
    <name type="common">Rat</name>
    <dbReference type="NCBI Taxonomy" id="10116"/>
    <lineage>
        <taxon>Eukaryota</taxon>
        <taxon>Metazoa</taxon>
        <taxon>Chordata</taxon>
        <taxon>Craniata</taxon>
        <taxon>Vertebrata</taxon>
        <taxon>Euteleostomi</taxon>
        <taxon>Mammalia</taxon>
        <taxon>Eutheria</taxon>
        <taxon>Euarchontoglires</taxon>
        <taxon>Glires</taxon>
        <taxon>Rodentia</taxon>
        <taxon>Myomorpha</taxon>
        <taxon>Muroidea</taxon>
        <taxon>Muridae</taxon>
        <taxon>Murinae</taxon>
        <taxon>Rattus</taxon>
    </lineage>
</organism>
<sequence>MANEANPCPCDIGHRLDYGGMGQEVQVEHIKAYVTRSPVDAGKAVIVVQDIFGWQLSNTRYMADMIAGNGYTTIVPDFFVGQEPWDPAGDWSTFPEWLKSRNARKINREVDAVLRYLKQQCHAQKIGIVGFCWGGIVVHHVMTTYPEVRAGVSVYGIIRDSEDVYNLKNPTLFIFAENDAVIPLEQVSILIQKLKEHCIVNYQVKTFSGQTHGFVHRKREDCSPADKPYIEEARRNLIEWLNKYI</sequence>
<feature type="initiator methionine" description="Removed" evidence="2">
    <location>
        <position position="1"/>
    </location>
</feature>
<feature type="chain" id="PRO_0000308191" description="Carboxymethylenebutenolidase homolog">
    <location>
        <begin position="2"/>
        <end position="245"/>
    </location>
</feature>
<feature type="active site" evidence="1">
    <location>
        <position position="132"/>
    </location>
</feature>
<feature type="active site" evidence="1">
    <location>
        <position position="179"/>
    </location>
</feature>
<feature type="active site" evidence="1">
    <location>
        <position position="212"/>
    </location>
</feature>
<feature type="modified residue" description="N-acetylalanine" evidence="2">
    <location>
        <position position="2"/>
    </location>
</feature>
<feature type="modified residue" description="Phosphoserine" evidence="2">
    <location>
        <position position="223"/>
    </location>
</feature>